<name>PYRD_SYNJB</name>
<gene>
    <name evidence="1" type="primary">pyrD</name>
    <name type="ordered locus">CYB_2280</name>
</gene>
<comment type="function">
    <text evidence="1">Catalyzes the conversion of dihydroorotate to orotate with quinone as electron acceptor.</text>
</comment>
<comment type="catalytic activity">
    <reaction evidence="1">
        <text>(S)-dihydroorotate + a quinone = orotate + a quinol</text>
        <dbReference type="Rhea" id="RHEA:30187"/>
        <dbReference type="ChEBI" id="CHEBI:24646"/>
        <dbReference type="ChEBI" id="CHEBI:30839"/>
        <dbReference type="ChEBI" id="CHEBI:30864"/>
        <dbReference type="ChEBI" id="CHEBI:132124"/>
        <dbReference type="EC" id="1.3.5.2"/>
    </reaction>
</comment>
<comment type="cofactor">
    <cofactor evidence="1">
        <name>FMN</name>
        <dbReference type="ChEBI" id="CHEBI:58210"/>
    </cofactor>
    <text evidence="1">Binds 1 FMN per subunit.</text>
</comment>
<comment type="pathway">
    <text evidence="1">Pyrimidine metabolism; UMP biosynthesis via de novo pathway; orotate from (S)-dihydroorotate (quinone route): step 1/1.</text>
</comment>
<comment type="subunit">
    <text evidence="1">Monomer.</text>
</comment>
<comment type="subcellular location">
    <subcellularLocation>
        <location evidence="1">Cell membrane</location>
        <topology evidence="1">Peripheral membrane protein</topology>
    </subcellularLocation>
</comment>
<comment type="similarity">
    <text evidence="1">Belongs to the dihydroorotate dehydrogenase family. Type 2 subfamily.</text>
</comment>
<sequence length="381" mass="41462">MNLYRDVLWPLLFSGLRADPEAVKMGLLRALHWIDATQATGILSALERLFCYRDPRLAVSLWGLTFPNPLGLAAGFDKDGLALGVWPSLGFGFVEVGTITPQPQPGNPKPRLFQLPQDRAALNRMGFNNQGAAALAERLRRLQQRPIPIGINLGKAKITPLEEAAADYLASFRLLQDLGDYFVVNVSSPNTPGLRSLQAAEQLEPILSALQRENQKRKPLLVKIAPDLDWPDIDSILELAQDHQLAGIVATNTTLRRDNLKTRFLPGRGIPFAPAESRPILAEAGGISGAPLRERSTQVIRYIHRSTQGKLPIIGVGGIFTLADALEKLEAGASLLQVYTGWVYEGPGMVPQLLRGLARSSPPSPDVTLPPENTPVGQIQA</sequence>
<proteinExistence type="inferred from homology"/>
<organism>
    <name type="scientific">Synechococcus sp. (strain JA-2-3B'a(2-13))</name>
    <name type="common">Cyanobacteria bacterium Yellowstone B-Prime</name>
    <dbReference type="NCBI Taxonomy" id="321332"/>
    <lineage>
        <taxon>Bacteria</taxon>
        <taxon>Bacillati</taxon>
        <taxon>Cyanobacteriota</taxon>
        <taxon>Cyanophyceae</taxon>
        <taxon>Synechococcales</taxon>
        <taxon>Synechococcaceae</taxon>
        <taxon>Synechococcus</taxon>
    </lineage>
</organism>
<evidence type="ECO:0000255" key="1">
    <source>
        <dbReference type="HAMAP-Rule" id="MF_00225"/>
    </source>
</evidence>
<evidence type="ECO:0000256" key="2">
    <source>
        <dbReference type="SAM" id="MobiDB-lite"/>
    </source>
</evidence>
<dbReference type="EC" id="1.3.5.2" evidence="1"/>
<dbReference type="EMBL" id="CP000240">
    <property type="protein sequence ID" value="ABD03221.1"/>
    <property type="molecule type" value="Genomic_DNA"/>
</dbReference>
<dbReference type="RefSeq" id="WP_011433850.1">
    <property type="nucleotide sequence ID" value="NC_007776.1"/>
</dbReference>
<dbReference type="SMR" id="Q2JJF3"/>
<dbReference type="STRING" id="321332.CYB_2280"/>
<dbReference type="KEGG" id="cyb:CYB_2280"/>
<dbReference type="eggNOG" id="COG0167">
    <property type="taxonomic scope" value="Bacteria"/>
</dbReference>
<dbReference type="HOGENOM" id="CLU_013640_2_0_3"/>
<dbReference type="OrthoDB" id="9802377at2"/>
<dbReference type="UniPathway" id="UPA00070">
    <property type="reaction ID" value="UER00946"/>
</dbReference>
<dbReference type="Proteomes" id="UP000001938">
    <property type="component" value="Chromosome"/>
</dbReference>
<dbReference type="GO" id="GO:0005737">
    <property type="term" value="C:cytoplasm"/>
    <property type="evidence" value="ECO:0007669"/>
    <property type="project" value="InterPro"/>
</dbReference>
<dbReference type="GO" id="GO:0005886">
    <property type="term" value="C:plasma membrane"/>
    <property type="evidence" value="ECO:0007669"/>
    <property type="project" value="UniProtKB-SubCell"/>
</dbReference>
<dbReference type="GO" id="GO:0106430">
    <property type="term" value="F:dihydroorotate dehydrogenase (quinone) activity"/>
    <property type="evidence" value="ECO:0007669"/>
    <property type="project" value="UniProtKB-EC"/>
</dbReference>
<dbReference type="GO" id="GO:0006207">
    <property type="term" value="P:'de novo' pyrimidine nucleobase biosynthetic process"/>
    <property type="evidence" value="ECO:0007669"/>
    <property type="project" value="InterPro"/>
</dbReference>
<dbReference type="GO" id="GO:0044205">
    <property type="term" value="P:'de novo' UMP biosynthetic process"/>
    <property type="evidence" value="ECO:0007669"/>
    <property type="project" value="UniProtKB-UniRule"/>
</dbReference>
<dbReference type="CDD" id="cd04738">
    <property type="entry name" value="DHOD_2_like"/>
    <property type="match status" value="1"/>
</dbReference>
<dbReference type="Gene3D" id="3.20.20.70">
    <property type="entry name" value="Aldolase class I"/>
    <property type="match status" value="1"/>
</dbReference>
<dbReference type="HAMAP" id="MF_00225">
    <property type="entry name" value="DHO_dh_type2"/>
    <property type="match status" value="1"/>
</dbReference>
<dbReference type="InterPro" id="IPR013785">
    <property type="entry name" value="Aldolase_TIM"/>
</dbReference>
<dbReference type="InterPro" id="IPR050074">
    <property type="entry name" value="DHO_dehydrogenase"/>
</dbReference>
<dbReference type="InterPro" id="IPR005719">
    <property type="entry name" value="Dihydroorotate_DH_2"/>
</dbReference>
<dbReference type="InterPro" id="IPR005720">
    <property type="entry name" value="Dihydroorotate_DH_cat"/>
</dbReference>
<dbReference type="InterPro" id="IPR001295">
    <property type="entry name" value="Dihydroorotate_DH_CS"/>
</dbReference>
<dbReference type="NCBIfam" id="NF003651">
    <property type="entry name" value="PRK05286.2-4"/>
    <property type="match status" value="1"/>
</dbReference>
<dbReference type="NCBIfam" id="NF003652">
    <property type="entry name" value="PRK05286.2-5"/>
    <property type="match status" value="1"/>
</dbReference>
<dbReference type="NCBIfam" id="TIGR01036">
    <property type="entry name" value="pyrD_sub2"/>
    <property type="match status" value="1"/>
</dbReference>
<dbReference type="PANTHER" id="PTHR48109:SF4">
    <property type="entry name" value="DIHYDROOROTATE DEHYDROGENASE (QUINONE), MITOCHONDRIAL"/>
    <property type="match status" value="1"/>
</dbReference>
<dbReference type="PANTHER" id="PTHR48109">
    <property type="entry name" value="DIHYDROOROTATE DEHYDROGENASE (QUINONE), MITOCHONDRIAL-RELATED"/>
    <property type="match status" value="1"/>
</dbReference>
<dbReference type="Pfam" id="PF01180">
    <property type="entry name" value="DHO_dh"/>
    <property type="match status" value="1"/>
</dbReference>
<dbReference type="SUPFAM" id="SSF51395">
    <property type="entry name" value="FMN-linked oxidoreductases"/>
    <property type="match status" value="1"/>
</dbReference>
<dbReference type="PROSITE" id="PS00911">
    <property type="entry name" value="DHODEHASE_1"/>
    <property type="match status" value="1"/>
</dbReference>
<dbReference type="PROSITE" id="PS00912">
    <property type="entry name" value="DHODEHASE_2"/>
    <property type="match status" value="1"/>
</dbReference>
<protein>
    <recommendedName>
        <fullName evidence="1">Dihydroorotate dehydrogenase (quinone)</fullName>
        <ecNumber evidence="1">1.3.5.2</ecNumber>
    </recommendedName>
    <alternativeName>
        <fullName evidence="1">DHOdehase</fullName>
        <shortName evidence="1">DHOD</shortName>
        <shortName evidence="1">DHODase</shortName>
    </alternativeName>
    <alternativeName>
        <fullName evidence="1">Dihydroorotate oxidase</fullName>
    </alternativeName>
</protein>
<reference key="1">
    <citation type="journal article" date="2007" name="ISME J.">
        <title>Population level functional diversity in a microbial community revealed by comparative genomic and metagenomic analyses.</title>
        <authorList>
            <person name="Bhaya D."/>
            <person name="Grossman A.R."/>
            <person name="Steunou A.-S."/>
            <person name="Khuri N."/>
            <person name="Cohan F.M."/>
            <person name="Hamamura N."/>
            <person name="Melendrez M.C."/>
            <person name="Bateson M.M."/>
            <person name="Ward D.M."/>
            <person name="Heidelberg J.F."/>
        </authorList>
    </citation>
    <scope>NUCLEOTIDE SEQUENCE [LARGE SCALE GENOMIC DNA]</scope>
    <source>
        <strain>JA-2-3B'a(2-13)</strain>
    </source>
</reference>
<keyword id="KW-1003">Cell membrane</keyword>
<keyword id="KW-0285">Flavoprotein</keyword>
<keyword id="KW-0288">FMN</keyword>
<keyword id="KW-0472">Membrane</keyword>
<keyword id="KW-0560">Oxidoreductase</keyword>
<keyword id="KW-0665">Pyrimidine biosynthesis</keyword>
<keyword id="KW-1185">Reference proteome</keyword>
<accession>Q2JJF3</accession>
<feature type="chain" id="PRO_1000024238" description="Dihydroorotate dehydrogenase (quinone)">
    <location>
        <begin position="1"/>
        <end position="381"/>
    </location>
</feature>
<feature type="region of interest" description="Disordered" evidence="2">
    <location>
        <begin position="359"/>
        <end position="381"/>
    </location>
</feature>
<feature type="active site" description="Nucleophile" evidence="1">
    <location>
        <position position="188"/>
    </location>
</feature>
<feature type="binding site" evidence="1">
    <location>
        <begin position="74"/>
        <end position="78"/>
    </location>
    <ligand>
        <name>FMN</name>
        <dbReference type="ChEBI" id="CHEBI:58210"/>
    </ligand>
</feature>
<feature type="binding site" evidence="1">
    <location>
        <position position="78"/>
    </location>
    <ligand>
        <name>substrate</name>
    </ligand>
</feature>
<feature type="binding site" evidence="1">
    <location>
        <position position="98"/>
    </location>
    <ligand>
        <name>FMN</name>
        <dbReference type="ChEBI" id="CHEBI:58210"/>
    </ligand>
</feature>
<feature type="binding site" evidence="1">
    <location>
        <begin position="123"/>
        <end position="127"/>
    </location>
    <ligand>
        <name>substrate</name>
    </ligand>
</feature>
<feature type="binding site" evidence="1">
    <location>
        <position position="152"/>
    </location>
    <ligand>
        <name>FMN</name>
        <dbReference type="ChEBI" id="CHEBI:58210"/>
    </ligand>
</feature>
<feature type="binding site" evidence="1">
    <location>
        <position position="185"/>
    </location>
    <ligand>
        <name>FMN</name>
        <dbReference type="ChEBI" id="CHEBI:58210"/>
    </ligand>
</feature>
<feature type="binding site" evidence="1">
    <location>
        <position position="185"/>
    </location>
    <ligand>
        <name>substrate</name>
    </ligand>
</feature>
<feature type="binding site" evidence="1">
    <location>
        <position position="190"/>
    </location>
    <ligand>
        <name>substrate</name>
    </ligand>
</feature>
<feature type="binding site" evidence="1">
    <location>
        <position position="223"/>
    </location>
    <ligand>
        <name>FMN</name>
        <dbReference type="ChEBI" id="CHEBI:58210"/>
    </ligand>
</feature>
<feature type="binding site" evidence="1">
    <location>
        <position position="251"/>
    </location>
    <ligand>
        <name>FMN</name>
        <dbReference type="ChEBI" id="CHEBI:58210"/>
    </ligand>
</feature>
<feature type="binding site" evidence="1">
    <location>
        <begin position="252"/>
        <end position="253"/>
    </location>
    <ligand>
        <name>substrate</name>
    </ligand>
</feature>
<feature type="binding site" evidence="1">
    <location>
        <position position="289"/>
    </location>
    <ligand>
        <name>FMN</name>
        <dbReference type="ChEBI" id="CHEBI:58210"/>
    </ligand>
</feature>
<feature type="binding site" evidence="1">
    <location>
        <position position="318"/>
    </location>
    <ligand>
        <name>FMN</name>
        <dbReference type="ChEBI" id="CHEBI:58210"/>
    </ligand>
</feature>
<feature type="binding site" evidence="1">
    <location>
        <begin position="339"/>
        <end position="340"/>
    </location>
    <ligand>
        <name>FMN</name>
        <dbReference type="ChEBI" id="CHEBI:58210"/>
    </ligand>
</feature>